<organism>
    <name type="scientific">Ateles geoffroyi</name>
    <name type="common">Black-handed spider monkey</name>
    <name type="synonym">Geoffroy's spider monkey</name>
    <dbReference type="NCBI Taxonomy" id="9509"/>
    <lineage>
        <taxon>Eukaryota</taxon>
        <taxon>Metazoa</taxon>
        <taxon>Chordata</taxon>
        <taxon>Craniata</taxon>
        <taxon>Vertebrata</taxon>
        <taxon>Euteleostomi</taxon>
        <taxon>Mammalia</taxon>
        <taxon>Eutheria</taxon>
        <taxon>Euarchontoglires</taxon>
        <taxon>Primates</taxon>
        <taxon>Haplorrhini</taxon>
        <taxon>Platyrrhini</taxon>
        <taxon>Atelidae</taxon>
        <taxon>Atelinae</taxon>
        <taxon>Ateles</taxon>
    </lineage>
</organism>
<feature type="signal peptide" evidence="5">
    <location>
        <begin position="1"/>
        <end position="25"/>
    </location>
</feature>
<feature type="chain" id="PRO_0000260339" description="Protein Wnt-2">
    <location>
        <begin position="26"/>
        <end position="360"/>
    </location>
</feature>
<feature type="lipid moiety-binding region" description="O-palmitoleoyl serine; by PORCN" evidence="4">
    <location>
        <position position="212"/>
    </location>
</feature>
<feature type="glycosylation site" description="N-linked (GlcNAc...) asparagine" evidence="5">
    <location>
        <position position="295"/>
    </location>
</feature>
<feature type="disulfide bond" evidence="3">
    <location>
        <begin position="76"/>
        <end position="87"/>
    </location>
</feature>
<feature type="disulfide bond" evidence="3">
    <location>
        <begin position="127"/>
        <end position="135"/>
    </location>
</feature>
<feature type="disulfide bond" evidence="3">
    <location>
        <begin position="137"/>
        <end position="157"/>
    </location>
</feature>
<feature type="disulfide bond" evidence="3">
    <location>
        <begin position="206"/>
        <end position="220"/>
    </location>
</feature>
<feature type="disulfide bond" evidence="3">
    <location>
        <begin position="208"/>
        <end position="215"/>
    </location>
</feature>
<feature type="disulfide bond" evidence="3">
    <location>
        <begin position="278"/>
        <end position="309"/>
    </location>
</feature>
<feature type="disulfide bond" evidence="3">
    <location>
        <begin position="294"/>
        <end position="304"/>
    </location>
</feature>
<feature type="disulfide bond" evidence="3">
    <location>
        <begin position="308"/>
        <end position="348"/>
    </location>
</feature>
<feature type="disulfide bond" evidence="3">
    <location>
        <begin position="324"/>
        <end position="339"/>
    </location>
</feature>
<feature type="disulfide bond" evidence="3">
    <location>
        <begin position="326"/>
        <end position="336"/>
    </location>
</feature>
<feature type="disulfide bond" evidence="3">
    <location>
        <begin position="331"/>
        <end position="332"/>
    </location>
</feature>
<dbReference type="EMBL" id="DP000177">
    <property type="protein sequence ID" value="ABI75273.1"/>
    <property type="molecule type" value="Genomic_DNA"/>
</dbReference>
<dbReference type="SMR" id="Q09YK7"/>
<dbReference type="GlyCosmos" id="Q09YK7">
    <property type="glycosylation" value="1 site, No reported glycans"/>
</dbReference>
<dbReference type="OrthoDB" id="5945655at2759"/>
<dbReference type="GO" id="GO:0005615">
    <property type="term" value="C:extracellular space"/>
    <property type="evidence" value="ECO:0007669"/>
    <property type="project" value="TreeGrafter"/>
</dbReference>
<dbReference type="GO" id="GO:0005125">
    <property type="term" value="F:cytokine activity"/>
    <property type="evidence" value="ECO:0007669"/>
    <property type="project" value="TreeGrafter"/>
</dbReference>
<dbReference type="GO" id="GO:0005109">
    <property type="term" value="F:frizzled binding"/>
    <property type="evidence" value="ECO:0007669"/>
    <property type="project" value="TreeGrafter"/>
</dbReference>
<dbReference type="GO" id="GO:0048513">
    <property type="term" value="P:animal organ development"/>
    <property type="evidence" value="ECO:0007669"/>
    <property type="project" value="UniProtKB-ARBA"/>
</dbReference>
<dbReference type="GO" id="GO:0060070">
    <property type="term" value="P:canonical Wnt signaling pathway"/>
    <property type="evidence" value="ECO:0007669"/>
    <property type="project" value="TreeGrafter"/>
</dbReference>
<dbReference type="GO" id="GO:0045165">
    <property type="term" value="P:cell fate commitment"/>
    <property type="evidence" value="ECO:0007669"/>
    <property type="project" value="TreeGrafter"/>
</dbReference>
<dbReference type="GO" id="GO:0030182">
    <property type="term" value="P:neuron differentiation"/>
    <property type="evidence" value="ECO:0007669"/>
    <property type="project" value="TreeGrafter"/>
</dbReference>
<dbReference type="CDD" id="cd19345">
    <property type="entry name" value="Wnt_Wnt2"/>
    <property type="match status" value="1"/>
</dbReference>
<dbReference type="FunFam" id="3.30.2460.20:FF:000001">
    <property type="entry name" value="Wnt homolog"/>
    <property type="match status" value="1"/>
</dbReference>
<dbReference type="Gene3D" id="3.30.2460.20">
    <property type="match status" value="1"/>
</dbReference>
<dbReference type="InterPro" id="IPR005817">
    <property type="entry name" value="Wnt"/>
</dbReference>
<dbReference type="InterPro" id="IPR009140">
    <property type="entry name" value="Wnt2"/>
</dbReference>
<dbReference type="InterPro" id="IPR043158">
    <property type="entry name" value="Wnt_C"/>
</dbReference>
<dbReference type="InterPro" id="IPR018161">
    <property type="entry name" value="Wnt_CS"/>
</dbReference>
<dbReference type="PANTHER" id="PTHR12027:SF86">
    <property type="entry name" value="PROTEIN WNT-2"/>
    <property type="match status" value="1"/>
</dbReference>
<dbReference type="PANTHER" id="PTHR12027">
    <property type="entry name" value="WNT RELATED"/>
    <property type="match status" value="1"/>
</dbReference>
<dbReference type="Pfam" id="PF00110">
    <property type="entry name" value="wnt"/>
    <property type="match status" value="1"/>
</dbReference>
<dbReference type="PRINTS" id="PR01842">
    <property type="entry name" value="WNT2PROTEIN"/>
</dbReference>
<dbReference type="PRINTS" id="PR01349">
    <property type="entry name" value="WNTPROTEIN"/>
</dbReference>
<dbReference type="SMART" id="SM00097">
    <property type="entry name" value="WNT1"/>
    <property type="match status" value="1"/>
</dbReference>
<dbReference type="PROSITE" id="PS00246">
    <property type="entry name" value="WNT1"/>
    <property type="match status" value="1"/>
</dbReference>
<accession>Q09YK7</accession>
<protein>
    <recommendedName>
        <fullName>Protein Wnt-2</fullName>
    </recommendedName>
</protein>
<keyword id="KW-0217">Developmental protein</keyword>
<keyword id="KW-1015">Disulfide bond</keyword>
<keyword id="KW-0272">Extracellular matrix</keyword>
<keyword id="KW-0325">Glycoprotein</keyword>
<keyword id="KW-0449">Lipoprotein</keyword>
<keyword id="KW-0964">Secreted</keyword>
<keyword id="KW-0732">Signal</keyword>
<keyword id="KW-0879">Wnt signaling pathway</keyword>
<gene>
    <name type="primary">WNT2</name>
</gene>
<reference key="1">
    <citation type="submission" date="2006-09" db="EMBL/GenBank/DDBJ databases">
        <title>NISC comparative sequencing initiative.</title>
        <authorList>
            <person name="Antonellis A."/>
            <person name="Ayele K."/>
            <person name="Benjamin B."/>
            <person name="Blakesley R.W."/>
            <person name="Boakye A."/>
            <person name="Bouffard G.G."/>
            <person name="Brinkley C."/>
            <person name="Brooks S."/>
            <person name="Chu G."/>
            <person name="Coleman H."/>
            <person name="Engle J."/>
            <person name="Gestole M."/>
            <person name="Greene A."/>
            <person name="Guan X."/>
            <person name="Gupta J."/>
            <person name="Haghighi P."/>
            <person name="Han J."/>
            <person name="Hansen N."/>
            <person name="Ho S.-L."/>
            <person name="Hu P."/>
            <person name="Hunter G."/>
            <person name="Hurle B."/>
            <person name="Idol J.R."/>
            <person name="Kwong P."/>
            <person name="Laric P."/>
            <person name="Larson S."/>
            <person name="Lee-Lin S.-Q."/>
            <person name="Legaspi R."/>
            <person name="Madden M."/>
            <person name="Maduro Q.L."/>
            <person name="Maduro V.B."/>
            <person name="Margulies E.H."/>
            <person name="Masiello C."/>
            <person name="Maskeri B."/>
            <person name="McDowell J."/>
            <person name="Mojidi H.A."/>
            <person name="Mullikin J.C."/>
            <person name="Oestreicher J.S."/>
            <person name="Park M."/>
            <person name="Portnoy M.E."/>
            <person name="Prasad A."/>
            <person name="Puri O."/>
            <person name="Reddix-Dugue N."/>
            <person name="Schandler K."/>
            <person name="Schueler M.G."/>
            <person name="Sison C."/>
            <person name="Stantripop S."/>
            <person name="Stephen E."/>
            <person name="Taye A."/>
            <person name="Thomas J.W."/>
            <person name="Thomas P.J."/>
            <person name="Tsipouri V."/>
            <person name="Ung L."/>
            <person name="Vogt J.L."/>
            <person name="Wetherby K.D."/>
            <person name="Young A."/>
            <person name="Green E.D."/>
        </authorList>
    </citation>
    <scope>NUCLEOTIDE SEQUENCE [LARGE SCALE GENOMIC DNA]</scope>
</reference>
<comment type="function">
    <text evidence="1">Ligand for members of the frizzled family of seven transmembrane receptors. Probable developmental protein. May be a signaling molecule which affects the development of discrete regions of tissues. Is likely to signal over only few cell diameters (By similarity).</text>
</comment>
<comment type="subcellular location">
    <subcellularLocation>
        <location evidence="1">Secreted</location>
        <location evidence="1">Extracellular space</location>
        <location evidence="1">Extracellular matrix</location>
    </subcellularLocation>
</comment>
<comment type="PTM">
    <text evidence="2 4">Palmitoleoylation is required for efficient binding to frizzled receptors. Depalmitoleoylation leads to Wnt signaling pathway inhibition.</text>
</comment>
<comment type="similarity">
    <text evidence="6">Belongs to the Wnt family.</text>
</comment>
<proteinExistence type="inferred from homology"/>
<sequence>MNSPLRGIWLWLPLLLTWLTPEVSSSWWYMGATGGSSRVMCDNVPGLVSSQRQLCHRHPDVMRAIGLGVTEWTAECQYQFRQHRWNCNTLDRDHSLFGRVLLRSSRESAFVYAISSAGVVFAITRACSQGEVKSCSCDPKKMGSGKDSKGVFDWGGCSDNIDYGIKFARAFVDAKERKGKDARALMNLHNNRAGRKSVKRFLKQECKCHGVSGSCSLRTCWLAMADFRKTGDYLWRKYNGAIQVVMNQDGTGFTVANERFKKPTKNDLVYFENSPDYCIRDRETGSLGTAGRVCNLTSRGMDSCEVMCCGRGYDTSHVTRMIKCGCKFHWCCAVRCQDCLEALDVHTCKAPKNADWTTPT</sequence>
<evidence type="ECO:0000250" key="1"/>
<evidence type="ECO:0000250" key="2">
    <source>
        <dbReference type="UniProtKB" id="P27467"/>
    </source>
</evidence>
<evidence type="ECO:0000250" key="3">
    <source>
        <dbReference type="UniProtKB" id="P28026"/>
    </source>
</evidence>
<evidence type="ECO:0000250" key="4">
    <source>
        <dbReference type="UniProtKB" id="P56704"/>
    </source>
</evidence>
<evidence type="ECO:0000255" key="5"/>
<evidence type="ECO:0000305" key="6"/>
<name>WNT2_ATEGE</name>